<name>CCY1A_CHRCN</name>
<proteinExistence type="evidence at protein level"/>
<reference key="1">
    <citation type="journal article" date="2015" name="Br. J. Pharmacol.">
        <title>Seven novel modulators of the analgesic target NaV 1.7 uncovered using a high-throughput venom-based discovery approach.</title>
        <authorList>
            <person name="Klint J.K."/>
            <person name="Smith J.J."/>
            <person name="Vetter I."/>
            <person name="Rupasinghe D.B."/>
            <person name="Er S.Y."/>
            <person name="Senff S."/>
            <person name="Herzig V."/>
            <person name="Mobli M."/>
            <person name="Lewis R.J."/>
            <person name="Bosmans F."/>
            <person name="King G.F."/>
        </authorList>
    </citation>
    <scope>PROTEIN SEQUENCE</scope>
    <scope>FUNCTION</scope>
    <scope>MASS SPECTROMETRY</scope>
    <scope>SUBCELLULAR LOCATION</scope>
    <source>
        <tissue>Venom</tissue>
    </source>
</reference>
<protein>
    <recommendedName>
        <fullName evidence="3">Mu-theraphotoxin-CCy1a</fullName>
        <shortName evidence="3">Mu-TRTX-CCy1a</shortName>
    </recommendedName>
</protein>
<accession>P0DP93</accession>
<organism>
    <name type="scientific">Chromatopelma cyaneopubescens</name>
    <name type="common">Greenbottle blue tarantula</name>
    <name type="synonym">Eurypelma cyaneopubescens</name>
    <dbReference type="NCBI Taxonomy" id="1795674"/>
    <lineage>
        <taxon>Eukaryota</taxon>
        <taxon>Metazoa</taxon>
        <taxon>Ecdysozoa</taxon>
        <taxon>Arthropoda</taxon>
        <taxon>Chelicerata</taxon>
        <taxon>Arachnida</taxon>
        <taxon>Araneae</taxon>
        <taxon>Mygalomorphae</taxon>
        <taxon>Theraphosidae</taxon>
        <taxon>Chromatopelma</taxon>
    </lineage>
</organism>
<keyword id="KW-0903">Direct protein sequencing</keyword>
<keyword id="KW-1015">Disulfide bond</keyword>
<keyword id="KW-0872">Ion channel impairing toxin</keyword>
<keyword id="KW-0960">Knottin</keyword>
<keyword id="KW-0528">Neurotoxin</keyword>
<keyword id="KW-0964">Secreted</keyword>
<keyword id="KW-0800">Toxin</keyword>
<keyword id="KW-0738">Voltage-gated sodium channel impairing toxin</keyword>
<sequence>DDCLGIFKSCNPDNDKCCESYKCSRRDKWCKYVL</sequence>
<feature type="chain" id="PRO_0000441851" description="Mu-theraphotoxin-CCy1a" evidence="2">
    <location>
        <begin position="1"/>
        <end position="34"/>
    </location>
</feature>
<feature type="disulfide bond" evidence="1">
    <location>
        <begin position="3"/>
        <end position="18"/>
    </location>
</feature>
<feature type="disulfide bond" evidence="1">
    <location>
        <begin position="10"/>
        <end position="23"/>
    </location>
</feature>
<feature type="disulfide bond" evidence="1">
    <location>
        <begin position="17"/>
        <end position="30"/>
    </location>
</feature>
<dbReference type="SMR" id="P0DP93"/>
<dbReference type="GO" id="GO:0005576">
    <property type="term" value="C:extracellular region"/>
    <property type="evidence" value="ECO:0007669"/>
    <property type="project" value="UniProtKB-SubCell"/>
</dbReference>
<dbReference type="GO" id="GO:0008200">
    <property type="term" value="F:ion channel inhibitor activity"/>
    <property type="evidence" value="ECO:0007669"/>
    <property type="project" value="InterPro"/>
</dbReference>
<dbReference type="GO" id="GO:0017080">
    <property type="term" value="F:sodium channel regulator activity"/>
    <property type="evidence" value="ECO:0007669"/>
    <property type="project" value="UniProtKB-KW"/>
</dbReference>
<dbReference type="GO" id="GO:0090729">
    <property type="term" value="F:toxin activity"/>
    <property type="evidence" value="ECO:0007669"/>
    <property type="project" value="UniProtKB-KW"/>
</dbReference>
<dbReference type="InterPro" id="IPR011696">
    <property type="entry name" value="Huwentoxin-1"/>
</dbReference>
<dbReference type="InterPro" id="IPR013140">
    <property type="entry name" value="Huwentoxin_CS1"/>
</dbReference>
<dbReference type="Pfam" id="PF07740">
    <property type="entry name" value="Toxin_12"/>
    <property type="match status" value="1"/>
</dbReference>
<dbReference type="SUPFAM" id="SSF57059">
    <property type="entry name" value="omega toxin-like"/>
    <property type="match status" value="1"/>
</dbReference>
<dbReference type="PROSITE" id="PS60021">
    <property type="entry name" value="HWTX_1"/>
    <property type="match status" value="1"/>
</dbReference>
<comment type="function">
    <text evidence="2">Voltage-gated sodium channel Nav1.7/SCN9A inhibitor.</text>
</comment>
<comment type="subcellular location">
    <subcellularLocation>
        <location evidence="2">Secreted</location>
    </subcellularLocation>
</comment>
<comment type="tissue specificity">
    <text evidence="5">Expressed by the venom gland.</text>
</comment>
<comment type="domain">
    <text evidence="5">The presence of a 'disulfide through disulfide knot' structurally defines this protein as a knottin.</text>
</comment>
<comment type="mass spectrometry">
    <text>Monoisotopic mass.</text>
</comment>
<comment type="similarity">
    <text evidence="4">Belongs to the neurotoxin 10 (Hwtx-1) family. 14 (Hntx-1) subfamily.</text>
</comment>
<evidence type="ECO:0000250" key="1">
    <source>
        <dbReference type="UniProtKB" id="D2Y1X7"/>
    </source>
</evidence>
<evidence type="ECO:0000269" key="2">
    <source>
    </source>
</evidence>
<evidence type="ECO:0000303" key="3">
    <source>
    </source>
</evidence>
<evidence type="ECO:0000305" key="4"/>
<evidence type="ECO:0000305" key="5">
    <source>
    </source>
</evidence>